<dbReference type="EC" id="3.1.-.-" evidence="1"/>
<dbReference type="EMBL" id="CP000561">
    <property type="protein sequence ID" value="ABO09180.1"/>
    <property type="molecule type" value="Genomic_DNA"/>
</dbReference>
<dbReference type="RefSeq" id="WP_011850439.1">
    <property type="nucleotide sequence ID" value="NC_009073.1"/>
</dbReference>
<dbReference type="SMR" id="A3MX13"/>
<dbReference type="STRING" id="410359.Pcal_1763"/>
<dbReference type="GeneID" id="4909519"/>
<dbReference type="KEGG" id="pcl:Pcal_1763"/>
<dbReference type="eggNOG" id="arCOG01741">
    <property type="taxonomic scope" value="Archaea"/>
</dbReference>
<dbReference type="HOGENOM" id="CLU_023334_0_0_2"/>
<dbReference type="OrthoDB" id="31300at2157"/>
<dbReference type="Proteomes" id="UP000001431">
    <property type="component" value="Chromosome"/>
</dbReference>
<dbReference type="GO" id="GO:0005737">
    <property type="term" value="C:cytoplasm"/>
    <property type="evidence" value="ECO:0007669"/>
    <property type="project" value="UniProtKB-SubCell"/>
</dbReference>
<dbReference type="GO" id="GO:0004519">
    <property type="term" value="F:endonuclease activity"/>
    <property type="evidence" value="ECO:0007669"/>
    <property type="project" value="UniProtKB-UniRule"/>
</dbReference>
<dbReference type="GO" id="GO:0046872">
    <property type="term" value="F:metal ion binding"/>
    <property type="evidence" value="ECO:0007669"/>
    <property type="project" value="UniProtKB-UniRule"/>
</dbReference>
<dbReference type="GO" id="GO:0070651">
    <property type="term" value="P:nonfunctional rRNA decay"/>
    <property type="evidence" value="ECO:0007669"/>
    <property type="project" value="TreeGrafter"/>
</dbReference>
<dbReference type="GO" id="GO:0070966">
    <property type="term" value="P:nuclear-transcribed mRNA catabolic process, no-go decay"/>
    <property type="evidence" value="ECO:0007669"/>
    <property type="project" value="InterPro"/>
</dbReference>
<dbReference type="GO" id="GO:0070481">
    <property type="term" value="P:nuclear-transcribed mRNA catabolic process, non-stop decay"/>
    <property type="evidence" value="ECO:0007669"/>
    <property type="project" value="InterPro"/>
</dbReference>
<dbReference type="GO" id="GO:0032790">
    <property type="term" value="P:ribosome disassembly"/>
    <property type="evidence" value="ECO:0007669"/>
    <property type="project" value="TreeGrafter"/>
</dbReference>
<dbReference type="GO" id="GO:0071025">
    <property type="term" value="P:RNA surveillance"/>
    <property type="evidence" value="ECO:0007669"/>
    <property type="project" value="InterPro"/>
</dbReference>
<dbReference type="Gene3D" id="3.30.1330.30">
    <property type="match status" value="1"/>
</dbReference>
<dbReference type="Gene3D" id="3.30.420.60">
    <property type="entry name" value="eRF1 domain 2"/>
    <property type="match status" value="1"/>
</dbReference>
<dbReference type="Gene3D" id="2.30.30.870">
    <property type="entry name" value="Pelota, domain A"/>
    <property type="match status" value="1"/>
</dbReference>
<dbReference type="HAMAP" id="MF_01853">
    <property type="entry name" value="PelO"/>
    <property type="match status" value="1"/>
</dbReference>
<dbReference type="InterPro" id="IPR042226">
    <property type="entry name" value="eFR1_2_sf"/>
</dbReference>
<dbReference type="InterPro" id="IPR005140">
    <property type="entry name" value="eRF1_1_Pelota"/>
</dbReference>
<dbReference type="InterPro" id="IPR005142">
    <property type="entry name" value="eRF1_3"/>
</dbReference>
<dbReference type="InterPro" id="IPR038069">
    <property type="entry name" value="Pelota/DOM34_N"/>
</dbReference>
<dbReference type="InterPro" id="IPR023521">
    <property type="entry name" value="Pelota_arc"/>
</dbReference>
<dbReference type="InterPro" id="IPR029064">
    <property type="entry name" value="Ribosomal_eL30-like_sf"/>
</dbReference>
<dbReference type="InterPro" id="IPR004405">
    <property type="entry name" value="Transl-rel_pelota"/>
</dbReference>
<dbReference type="PANTHER" id="PTHR10853">
    <property type="entry name" value="PELOTA"/>
    <property type="match status" value="1"/>
</dbReference>
<dbReference type="PANTHER" id="PTHR10853:SF0">
    <property type="entry name" value="PROTEIN PELOTA HOMOLOG"/>
    <property type="match status" value="1"/>
</dbReference>
<dbReference type="Pfam" id="PF03463">
    <property type="entry name" value="eRF1_1"/>
    <property type="match status" value="1"/>
</dbReference>
<dbReference type="Pfam" id="PF03465">
    <property type="entry name" value="eRF1_3"/>
    <property type="match status" value="1"/>
</dbReference>
<dbReference type="SMART" id="SM01194">
    <property type="entry name" value="eRF1_1"/>
    <property type="match status" value="1"/>
</dbReference>
<dbReference type="SUPFAM" id="SSF159065">
    <property type="entry name" value="Dom34/Pelota N-terminal domain-like"/>
    <property type="match status" value="1"/>
</dbReference>
<dbReference type="SUPFAM" id="SSF55315">
    <property type="entry name" value="L30e-like"/>
    <property type="match status" value="1"/>
</dbReference>
<dbReference type="SUPFAM" id="SSF53137">
    <property type="entry name" value="Translational machinery components"/>
    <property type="match status" value="1"/>
</dbReference>
<comment type="function">
    <text evidence="1">May function in recognizing stalled ribosomes, interact with stem-loop structures in stalled mRNA molecules, and effect endonucleolytic cleavage of the mRNA. May play a role in the release non-functional ribosomes and degradation of damaged mRNAs. Has endoribonuclease activity.</text>
</comment>
<comment type="cofactor">
    <cofactor evidence="1">
        <name>a divalent metal cation</name>
        <dbReference type="ChEBI" id="CHEBI:60240"/>
    </cofactor>
</comment>
<comment type="subunit">
    <text evidence="1">Monomer.</text>
</comment>
<comment type="subcellular location">
    <subcellularLocation>
        <location evidence="1">Cytoplasm</location>
    </subcellularLocation>
</comment>
<comment type="domain">
    <text evidence="1">The N-terminal domain has the RNA-binding Sm fold. It harbors the endoribonuclease activity.</text>
</comment>
<comment type="similarity">
    <text evidence="1">Belongs to the eukaryotic release factor 1 family. Pelota subfamily.</text>
</comment>
<gene>
    <name evidence="1" type="primary">pelA</name>
    <name type="ordered locus">Pcal_1763</name>
</gene>
<evidence type="ECO:0000255" key="1">
    <source>
        <dbReference type="HAMAP-Rule" id="MF_01853"/>
    </source>
</evidence>
<reference key="1">
    <citation type="submission" date="2007-02" db="EMBL/GenBank/DDBJ databases">
        <title>Complete sequence of Pyrobaculum calidifontis JCM 11548.</title>
        <authorList>
            <consortium name="US DOE Joint Genome Institute"/>
            <person name="Copeland A."/>
            <person name="Lucas S."/>
            <person name="Lapidus A."/>
            <person name="Barry K."/>
            <person name="Glavina del Rio T."/>
            <person name="Dalin E."/>
            <person name="Tice H."/>
            <person name="Pitluck S."/>
            <person name="Chain P."/>
            <person name="Malfatti S."/>
            <person name="Shin M."/>
            <person name="Vergez L."/>
            <person name="Schmutz J."/>
            <person name="Larimer F."/>
            <person name="Land M."/>
            <person name="Hauser L."/>
            <person name="Kyrpides N."/>
            <person name="Mikhailova N."/>
            <person name="Cozen A.E."/>
            <person name="Fitz-Gibbon S.T."/>
            <person name="House C.H."/>
            <person name="Saltikov C."/>
            <person name="Lowe T.M."/>
            <person name="Richardson P."/>
        </authorList>
    </citation>
    <scope>NUCLEOTIDE SEQUENCE [LARGE SCALE GENOMIC DNA]</scope>
    <source>
        <strain>DSM 21063 / JCM 11548 / VA1</strain>
    </source>
</reference>
<proteinExistence type="inferred from homology"/>
<keyword id="KW-0963">Cytoplasm</keyword>
<keyword id="KW-0255">Endonuclease</keyword>
<keyword id="KW-0378">Hydrolase</keyword>
<keyword id="KW-0479">Metal-binding</keyword>
<keyword id="KW-0540">Nuclease</keyword>
<sequence>MKFELDEKRRVVRIVPEREEDLYFIYLLIDRGDIVRGWTVREYKPEGAKEGERVKMYLGISVEKIEYHKFRSSLRVRGTVVEVQEEVEGVKGRRHTFEIVPGREVVVEKRRGSVEVVKRILDMANVALPRILLVSIDDEEAALAYISALGAEIMYTVPNQVNRGKRGESLLEDFFKSVNTLVEEVKRLRKIDRVVLAGPGMVVDQAGRYIRGERVVQSSGGVAGVYEFLRSGLYDKLKEELGLEAYSRLQKMLASQRDLVALGVEEVKEAVSIGRAETVLILDTYMKEKPDEAWEILSQVYNTGGKVYIVREDTEVGAAIRAMGNIVALLRW</sequence>
<accession>A3MX13</accession>
<name>PELO_PYRCJ</name>
<protein>
    <recommendedName>
        <fullName evidence="1">Protein pelota homolog</fullName>
        <ecNumber evidence="1">3.1.-.-</ecNumber>
    </recommendedName>
</protein>
<organism>
    <name type="scientific">Pyrobaculum calidifontis (strain DSM 21063 / JCM 11548 / VA1)</name>
    <dbReference type="NCBI Taxonomy" id="410359"/>
    <lineage>
        <taxon>Archaea</taxon>
        <taxon>Thermoproteota</taxon>
        <taxon>Thermoprotei</taxon>
        <taxon>Thermoproteales</taxon>
        <taxon>Thermoproteaceae</taxon>
        <taxon>Pyrobaculum</taxon>
    </lineage>
</organism>
<feature type="chain" id="PRO_0000361815" description="Protein pelota homolog">
    <location>
        <begin position="1"/>
        <end position="332"/>
    </location>
</feature>